<organism>
    <name type="scientific">Aedes aegypti</name>
    <name type="common">Yellowfever mosquito</name>
    <name type="synonym">Culex aegypti</name>
    <dbReference type="NCBI Taxonomy" id="7159"/>
    <lineage>
        <taxon>Eukaryota</taxon>
        <taxon>Metazoa</taxon>
        <taxon>Ecdysozoa</taxon>
        <taxon>Arthropoda</taxon>
        <taxon>Hexapoda</taxon>
        <taxon>Insecta</taxon>
        <taxon>Pterygota</taxon>
        <taxon>Neoptera</taxon>
        <taxon>Endopterygota</taxon>
        <taxon>Diptera</taxon>
        <taxon>Nematocera</taxon>
        <taxon>Culicoidea</taxon>
        <taxon>Culicidae</taxon>
        <taxon>Culicinae</taxon>
        <taxon>Aedini</taxon>
        <taxon>Aedes</taxon>
        <taxon>Stegomyia</taxon>
    </lineage>
</organism>
<name>CUE_AEDAE</name>
<sequence length="664" mass="75077">MRNLGIAVTFAVLLVIGYVTALEWDAVVTTDSGILFFDKNWTQISSGGHQFHHISAFAYDEVKRKLYFSDLKDPSFRIFSLDTKPEEEYHKVAKLLPKSDQTGYITGLAFDHLERKLYWTEKGTHSVYSVEVDKLGAPANATDGLINLVAQVEENHDLAALTIDECRRHLYWTNSYLQTSSIVRAAMNGTVLDDHKEDVYEPRGISVDHYNNRIYWVEKKYGRAFTVESANLEVQDRQTFLRGEDKIPTHVSPNSQYLYWIDQEDGEVHETMKSDSKVTRVVYKGSRPSALIIRSGLLVEYQKNNPSCKAVVSEIIDNVRKESSEVKDVAQAVTSKPEMITCLNKGILNHNTNSCICLPEYQGTFCEIPICNNFCVHGECVVGADSRPMCKCHAEFEGERCDRNICDGYCLNNGRCALSATGQRSCTCSKNFSGARCETAICTSDYCYNGECFVENEVPECKCNVGYRGDRCEEYTCNNYCLHDGTCILNNDTMLVECRCGSEYTGKRCEIPKRFCSLDNGNPEMQQYCEGVAIAKNLVEPQVTYCKNSFNRTVVYVSLAFTASLVTLVTILCTVRRMYERNRPRITKRFKVTNNTQMTSRPATQCEITIENCCNMNVCETPCFDTKILQKSATKAEDKQFLLDDIESIAGSYRKLPSCVAEKN</sequence>
<gene>
    <name evidence="1" type="primary">cue</name>
    <name type="ORF">AAEL008564</name>
</gene>
<feature type="signal peptide" evidence="2">
    <location>
        <begin position="1"/>
        <end position="21"/>
    </location>
</feature>
<feature type="chain" id="PRO_0000386566" description="Protein cueball" evidence="2">
    <location>
        <begin position="22"/>
        <end position="664"/>
    </location>
</feature>
<feature type="topological domain" description="Extracellular" evidence="2">
    <location>
        <begin position="22"/>
        <end position="552"/>
    </location>
</feature>
<feature type="transmembrane region" description="Helical" evidence="2">
    <location>
        <begin position="553"/>
        <end position="573"/>
    </location>
</feature>
<feature type="topological domain" description="Cytoplasmic" evidence="2">
    <location>
        <begin position="574"/>
        <end position="664"/>
    </location>
</feature>
<feature type="repeat" description="LDL-receptor class B 1" evidence="2">
    <location>
        <begin position="115"/>
        <end position="157"/>
    </location>
</feature>
<feature type="repeat" description="LDL-receptor class B 2" evidence="2">
    <location>
        <begin position="168"/>
        <end position="211"/>
    </location>
</feature>
<feature type="repeat" description="LDL-receptor class B 3" evidence="2">
    <location>
        <begin position="212"/>
        <end position="257"/>
    </location>
</feature>
<feature type="domain" description="EGF-like 1" evidence="3">
    <location>
        <begin position="367"/>
        <end position="399"/>
    </location>
</feature>
<feature type="domain" description="EGF-like 2" evidence="3">
    <location>
        <begin position="402"/>
        <end position="438"/>
    </location>
</feature>
<feature type="domain" description="EGF-like 3" evidence="3">
    <location>
        <begin position="473"/>
        <end position="510"/>
    </location>
</feature>
<feature type="glycosylation site" description="N-linked (GlcNAc...) asparagine" evidence="2">
    <location>
        <position position="40"/>
    </location>
</feature>
<feature type="glycosylation site" description="N-linked (GlcNAc...) asparagine" evidence="2">
    <location>
        <position position="140"/>
    </location>
</feature>
<feature type="glycosylation site" description="N-linked (GlcNAc...) asparagine" evidence="2">
    <location>
        <position position="188"/>
    </location>
</feature>
<feature type="glycosylation site" description="N-linked (GlcNAc...) asparagine" evidence="2">
    <location>
        <position position="431"/>
    </location>
</feature>
<feature type="glycosylation site" description="N-linked (GlcNAc...) asparagine" evidence="2">
    <location>
        <position position="491"/>
    </location>
</feature>
<feature type="glycosylation site" description="N-linked (GlcNAc...) asparagine" evidence="2">
    <location>
        <position position="551"/>
    </location>
</feature>
<feature type="disulfide bond" evidence="3">
    <location>
        <begin position="371"/>
        <end position="380"/>
    </location>
</feature>
<feature type="disulfide bond" evidence="3">
    <location>
        <begin position="375"/>
        <end position="390"/>
    </location>
</feature>
<feature type="disulfide bond" evidence="3">
    <location>
        <begin position="406"/>
        <end position="416"/>
    </location>
</feature>
<feature type="disulfide bond" evidence="3">
    <location>
        <begin position="410"/>
        <end position="426"/>
    </location>
</feature>
<feature type="disulfide bond" evidence="3">
    <location>
        <begin position="428"/>
        <end position="437"/>
    </location>
</feature>
<feature type="disulfide bond" evidence="3">
    <location>
        <begin position="477"/>
        <end position="487"/>
    </location>
</feature>
<feature type="disulfide bond" evidence="3">
    <location>
        <begin position="481"/>
        <end position="498"/>
    </location>
</feature>
<feature type="disulfide bond" evidence="3">
    <location>
        <begin position="500"/>
        <end position="509"/>
    </location>
</feature>
<reference evidence="5" key="1">
    <citation type="journal article" date="2007" name="Science">
        <title>Genome sequence of Aedes aegypti, a major arbovirus vector.</title>
        <authorList>
            <person name="Nene V."/>
            <person name="Wortman J.R."/>
            <person name="Lawson D."/>
            <person name="Haas B.J."/>
            <person name="Kodira C.D."/>
            <person name="Tu Z.J."/>
            <person name="Loftus B.J."/>
            <person name="Xi Z."/>
            <person name="Megy K."/>
            <person name="Grabherr M."/>
            <person name="Ren Q."/>
            <person name="Zdobnov E.M."/>
            <person name="Lobo N.F."/>
            <person name="Campbell K.S."/>
            <person name="Brown S.E."/>
            <person name="Bonaldo M.F."/>
            <person name="Zhu J."/>
            <person name="Sinkins S.P."/>
            <person name="Hogenkamp D.G."/>
            <person name="Amedeo P."/>
            <person name="Arensburger P."/>
            <person name="Atkinson P.W."/>
            <person name="Bidwell S.L."/>
            <person name="Biedler J."/>
            <person name="Birney E."/>
            <person name="Bruggner R.V."/>
            <person name="Costas J."/>
            <person name="Coy M.R."/>
            <person name="Crabtree J."/>
            <person name="Crawford M."/>
            <person name="DeBruyn B."/>
            <person name="DeCaprio D."/>
            <person name="Eiglmeier K."/>
            <person name="Eisenstadt E."/>
            <person name="El-Dorry H."/>
            <person name="Gelbart W.M."/>
            <person name="Gomes S.L."/>
            <person name="Hammond M."/>
            <person name="Hannick L.I."/>
            <person name="Hogan J.R."/>
            <person name="Holmes M.H."/>
            <person name="Jaffe D."/>
            <person name="Johnston S.J."/>
            <person name="Kennedy R.C."/>
            <person name="Koo H."/>
            <person name="Kravitz S."/>
            <person name="Kriventseva E.V."/>
            <person name="Kulp D."/>
            <person name="Labutti K."/>
            <person name="Lee E."/>
            <person name="Li S."/>
            <person name="Lovin D.D."/>
            <person name="Mao C."/>
            <person name="Mauceli E."/>
            <person name="Menck C.F."/>
            <person name="Miller J.R."/>
            <person name="Montgomery P."/>
            <person name="Mori A."/>
            <person name="Nascimento A.L."/>
            <person name="Naveira H.F."/>
            <person name="Nusbaum C."/>
            <person name="O'Leary S.B."/>
            <person name="Orvis J."/>
            <person name="Pertea M."/>
            <person name="Quesneville H."/>
            <person name="Reidenbach K.R."/>
            <person name="Rogers Y.-H.C."/>
            <person name="Roth C.W."/>
            <person name="Schneider J.R."/>
            <person name="Schatz M."/>
            <person name="Shumway M."/>
            <person name="Stanke M."/>
            <person name="Stinson E.O."/>
            <person name="Tubio J.M.C."/>
            <person name="Vanzee J.P."/>
            <person name="Verjovski-Almeida S."/>
            <person name="Werner D."/>
            <person name="White O.R."/>
            <person name="Wyder S."/>
            <person name="Zeng Q."/>
            <person name="Zhao Q."/>
            <person name="Zhao Y."/>
            <person name="Hill C.A."/>
            <person name="Raikhel A.S."/>
            <person name="Soares M.B."/>
            <person name="Knudson D.L."/>
            <person name="Lee N.H."/>
            <person name="Galagan J."/>
            <person name="Salzberg S.L."/>
            <person name="Paulsen I.T."/>
            <person name="Dimopoulos G."/>
            <person name="Collins F.H."/>
            <person name="Bruce B."/>
            <person name="Fraser-Liggett C.M."/>
            <person name="Severson D.W."/>
        </authorList>
    </citation>
    <scope>NUCLEOTIDE SEQUENCE [LARGE SCALE GENOMIC DNA]</scope>
    <source>
        <strain>LVPib12</strain>
    </source>
</reference>
<accession>Q16YE7</accession>
<protein>
    <recommendedName>
        <fullName evidence="1">Protein cueball</fullName>
    </recommendedName>
</protein>
<evidence type="ECO:0000250" key="1">
    <source>
        <dbReference type="UniProtKB" id="Q95RU0"/>
    </source>
</evidence>
<evidence type="ECO:0000255" key="2"/>
<evidence type="ECO:0000255" key="3">
    <source>
        <dbReference type="PROSITE-ProRule" id="PRU00076"/>
    </source>
</evidence>
<evidence type="ECO:0000305" key="4"/>
<evidence type="ECO:0000312" key="5">
    <source>
        <dbReference type="EMBL" id="EAT39657.1"/>
    </source>
</evidence>
<comment type="function">
    <text evidence="1">Has a role in spermatogenesis and oogenesis.</text>
</comment>
<comment type="subcellular location">
    <subcellularLocation>
        <location evidence="4">Cell membrane</location>
        <topology evidence="4">Single-pass type I membrane protein</topology>
    </subcellularLocation>
</comment>
<comment type="similarity">
    <text evidence="4">Belongs to the cueball family.</text>
</comment>
<proteinExistence type="inferred from homology"/>
<keyword id="KW-1003">Cell membrane</keyword>
<keyword id="KW-0221">Differentiation</keyword>
<keyword id="KW-1015">Disulfide bond</keyword>
<keyword id="KW-0245">EGF-like domain</keyword>
<keyword id="KW-0325">Glycoprotein</keyword>
<keyword id="KW-0472">Membrane</keyword>
<keyword id="KW-0896">Oogenesis</keyword>
<keyword id="KW-1185">Reference proteome</keyword>
<keyword id="KW-0677">Repeat</keyword>
<keyword id="KW-0732">Signal</keyword>
<keyword id="KW-0744">Spermatogenesis</keyword>
<keyword id="KW-0812">Transmembrane</keyword>
<keyword id="KW-1133">Transmembrane helix</keyword>
<dbReference type="EMBL" id="CH477517">
    <property type="protein sequence ID" value="EAT39657.1"/>
    <property type="molecule type" value="Genomic_DNA"/>
</dbReference>
<dbReference type="SMR" id="Q16YE7"/>
<dbReference type="FunCoup" id="Q16YE7">
    <property type="interactions" value="155"/>
</dbReference>
<dbReference type="GlyCosmos" id="Q16YE7">
    <property type="glycosylation" value="6 sites, No reported glycans"/>
</dbReference>
<dbReference type="PaxDb" id="7159-AAEL008564-PA"/>
<dbReference type="EnsemblMetazoa" id="AAEL008564-RA">
    <property type="protein sequence ID" value="AAEL008564-PA"/>
    <property type="gene ID" value="AAEL008564"/>
</dbReference>
<dbReference type="GeneID" id="5570793"/>
<dbReference type="KEGG" id="aag:5570793"/>
<dbReference type="VEuPathDB" id="VectorBase:AAEL008564"/>
<dbReference type="eggNOG" id="KOG1215">
    <property type="taxonomic scope" value="Eukaryota"/>
</dbReference>
<dbReference type="HOGENOM" id="CLU_026602_0_0_1"/>
<dbReference type="InParanoid" id="Q16YE7"/>
<dbReference type="OMA" id="RCEQNST"/>
<dbReference type="OrthoDB" id="382013at2759"/>
<dbReference type="PhylomeDB" id="Q16YE7"/>
<dbReference type="Proteomes" id="UP000008820">
    <property type="component" value="Chromosome 2"/>
</dbReference>
<dbReference type="Proteomes" id="UP000682892">
    <property type="component" value="Unassembled WGS sequence"/>
</dbReference>
<dbReference type="GO" id="GO:0005886">
    <property type="term" value="C:plasma membrane"/>
    <property type="evidence" value="ECO:0007669"/>
    <property type="project" value="UniProtKB-SubCell"/>
</dbReference>
<dbReference type="GO" id="GO:0042813">
    <property type="term" value="F:Wnt receptor activity"/>
    <property type="evidence" value="ECO:0007669"/>
    <property type="project" value="TreeGrafter"/>
</dbReference>
<dbReference type="GO" id="GO:0017147">
    <property type="term" value="F:Wnt-protein binding"/>
    <property type="evidence" value="ECO:0007669"/>
    <property type="project" value="TreeGrafter"/>
</dbReference>
<dbReference type="GO" id="GO:0060070">
    <property type="term" value="P:canonical Wnt signaling pathway"/>
    <property type="evidence" value="ECO:0007669"/>
    <property type="project" value="TreeGrafter"/>
</dbReference>
<dbReference type="GO" id="GO:0048477">
    <property type="term" value="P:oogenesis"/>
    <property type="evidence" value="ECO:0007669"/>
    <property type="project" value="UniProtKB-KW"/>
</dbReference>
<dbReference type="GO" id="GO:0007283">
    <property type="term" value="P:spermatogenesis"/>
    <property type="evidence" value="ECO:0007669"/>
    <property type="project" value="UniProtKB-KW"/>
</dbReference>
<dbReference type="Gene3D" id="2.10.25.10">
    <property type="entry name" value="Laminin"/>
    <property type="match status" value="4"/>
</dbReference>
<dbReference type="Gene3D" id="2.120.10.30">
    <property type="entry name" value="TolB, C-terminal domain"/>
    <property type="match status" value="1"/>
</dbReference>
<dbReference type="InterPro" id="IPR011042">
    <property type="entry name" value="6-blade_b-propeller_TolB-like"/>
</dbReference>
<dbReference type="InterPro" id="IPR050778">
    <property type="entry name" value="Cueball_EGF_LRP_Nidogen"/>
</dbReference>
<dbReference type="InterPro" id="IPR000742">
    <property type="entry name" value="EGF-like_dom"/>
</dbReference>
<dbReference type="InterPro" id="IPR000033">
    <property type="entry name" value="LDLR_classB_rpt"/>
</dbReference>
<dbReference type="PANTHER" id="PTHR46513:SF42">
    <property type="entry name" value="PROTEIN CUEBALL"/>
    <property type="match status" value="1"/>
</dbReference>
<dbReference type="PANTHER" id="PTHR46513">
    <property type="entry name" value="VITELLOGENIN RECEPTOR-LIKE PROTEIN-RELATED-RELATED"/>
    <property type="match status" value="1"/>
</dbReference>
<dbReference type="SMART" id="SM00181">
    <property type="entry name" value="EGF"/>
    <property type="match status" value="4"/>
</dbReference>
<dbReference type="SMART" id="SM00135">
    <property type="entry name" value="LY"/>
    <property type="match status" value="5"/>
</dbReference>
<dbReference type="SUPFAM" id="SSF57196">
    <property type="entry name" value="EGF/Laminin"/>
    <property type="match status" value="4"/>
</dbReference>
<dbReference type="SUPFAM" id="SSF63825">
    <property type="entry name" value="YWTD domain"/>
    <property type="match status" value="1"/>
</dbReference>
<dbReference type="PROSITE" id="PS00022">
    <property type="entry name" value="EGF_1"/>
    <property type="match status" value="5"/>
</dbReference>
<dbReference type="PROSITE" id="PS01186">
    <property type="entry name" value="EGF_2"/>
    <property type="match status" value="1"/>
</dbReference>
<dbReference type="PROSITE" id="PS50026">
    <property type="entry name" value="EGF_3"/>
    <property type="match status" value="3"/>
</dbReference>